<keyword id="KW-0025">Alternative splicing</keyword>
<keyword id="KW-0106">Calcium</keyword>
<keyword id="KW-0479">Metal-binding</keyword>
<keyword id="KW-1185">Reference proteome</keyword>
<keyword id="KW-0677">Repeat</keyword>
<proteinExistence type="evidence at transcript level"/>
<protein>
    <recommendedName>
        <fullName>Calcyphosin-2</fullName>
    </recommendedName>
    <alternativeName>
        <fullName>Calcyphosine-2</fullName>
    </alternativeName>
</protein>
<comment type="alternative products">
    <event type="alternative splicing"/>
    <isoform>
        <id>Q8BUG5-1</id>
        <name>1</name>
        <sequence type="displayed"/>
    </isoform>
    <isoform>
        <id>Q8BUG5-2</id>
        <name>2</name>
        <sequence type="described" ref="VSP_014411 VSP_014412"/>
    </isoform>
    <isoform>
        <id>Q8BUG5-3</id>
        <name>3</name>
        <sequence type="described" ref="VSP_062160"/>
    </isoform>
</comment>
<organism>
    <name type="scientific">Mus musculus</name>
    <name type="common">Mouse</name>
    <dbReference type="NCBI Taxonomy" id="10090"/>
    <lineage>
        <taxon>Eukaryota</taxon>
        <taxon>Metazoa</taxon>
        <taxon>Chordata</taxon>
        <taxon>Craniata</taxon>
        <taxon>Vertebrata</taxon>
        <taxon>Euteleostomi</taxon>
        <taxon>Mammalia</taxon>
        <taxon>Eutheria</taxon>
        <taxon>Euarchontoglires</taxon>
        <taxon>Glires</taxon>
        <taxon>Rodentia</taxon>
        <taxon>Myomorpha</taxon>
        <taxon>Muroidea</taxon>
        <taxon>Muridae</taxon>
        <taxon>Murinae</taxon>
        <taxon>Mus</taxon>
        <taxon>Mus</taxon>
    </lineage>
</organism>
<accession>Q8BUG5</accession>
<accession>E9Q2J8</accession>
<accession>G3X9M5</accession>
<accession>Q8C1J6</accession>
<evidence type="ECO:0000255" key="1">
    <source>
        <dbReference type="PROSITE-ProRule" id="PRU00448"/>
    </source>
</evidence>
<evidence type="ECO:0000256" key="2">
    <source>
        <dbReference type="SAM" id="MobiDB-lite"/>
    </source>
</evidence>
<evidence type="ECO:0000303" key="3">
    <source>
    </source>
</evidence>
<evidence type="ECO:0000305" key="4"/>
<name>CAYP2_MOUSE</name>
<reference key="1">
    <citation type="journal article" date="2005" name="Science">
        <title>The transcriptional landscape of the mammalian genome.</title>
        <authorList>
            <person name="Carninci P."/>
            <person name="Kasukawa T."/>
            <person name="Katayama S."/>
            <person name="Gough J."/>
            <person name="Frith M.C."/>
            <person name="Maeda N."/>
            <person name="Oyama R."/>
            <person name="Ravasi T."/>
            <person name="Lenhard B."/>
            <person name="Wells C."/>
            <person name="Kodzius R."/>
            <person name="Shimokawa K."/>
            <person name="Bajic V.B."/>
            <person name="Brenner S.E."/>
            <person name="Batalov S."/>
            <person name="Forrest A.R."/>
            <person name="Zavolan M."/>
            <person name="Davis M.J."/>
            <person name="Wilming L.G."/>
            <person name="Aidinis V."/>
            <person name="Allen J.E."/>
            <person name="Ambesi-Impiombato A."/>
            <person name="Apweiler R."/>
            <person name="Aturaliya R.N."/>
            <person name="Bailey T.L."/>
            <person name="Bansal M."/>
            <person name="Baxter L."/>
            <person name="Beisel K.W."/>
            <person name="Bersano T."/>
            <person name="Bono H."/>
            <person name="Chalk A.M."/>
            <person name="Chiu K.P."/>
            <person name="Choudhary V."/>
            <person name="Christoffels A."/>
            <person name="Clutterbuck D.R."/>
            <person name="Crowe M.L."/>
            <person name="Dalla E."/>
            <person name="Dalrymple B.P."/>
            <person name="de Bono B."/>
            <person name="Della Gatta G."/>
            <person name="di Bernardo D."/>
            <person name="Down T."/>
            <person name="Engstrom P."/>
            <person name="Fagiolini M."/>
            <person name="Faulkner G."/>
            <person name="Fletcher C.F."/>
            <person name="Fukushima T."/>
            <person name="Furuno M."/>
            <person name="Futaki S."/>
            <person name="Gariboldi M."/>
            <person name="Georgii-Hemming P."/>
            <person name="Gingeras T.R."/>
            <person name="Gojobori T."/>
            <person name="Green R.E."/>
            <person name="Gustincich S."/>
            <person name="Harbers M."/>
            <person name="Hayashi Y."/>
            <person name="Hensch T.K."/>
            <person name="Hirokawa N."/>
            <person name="Hill D."/>
            <person name="Huminiecki L."/>
            <person name="Iacono M."/>
            <person name="Ikeo K."/>
            <person name="Iwama A."/>
            <person name="Ishikawa T."/>
            <person name="Jakt M."/>
            <person name="Kanapin A."/>
            <person name="Katoh M."/>
            <person name="Kawasawa Y."/>
            <person name="Kelso J."/>
            <person name="Kitamura H."/>
            <person name="Kitano H."/>
            <person name="Kollias G."/>
            <person name="Krishnan S.P."/>
            <person name="Kruger A."/>
            <person name="Kummerfeld S.K."/>
            <person name="Kurochkin I.V."/>
            <person name="Lareau L.F."/>
            <person name="Lazarevic D."/>
            <person name="Lipovich L."/>
            <person name="Liu J."/>
            <person name="Liuni S."/>
            <person name="McWilliam S."/>
            <person name="Madan Babu M."/>
            <person name="Madera M."/>
            <person name="Marchionni L."/>
            <person name="Matsuda H."/>
            <person name="Matsuzawa S."/>
            <person name="Miki H."/>
            <person name="Mignone F."/>
            <person name="Miyake S."/>
            <person name="Morris K."/>
            <person name="Mottagui-Tabar S."/>
            <person name="Mulder N."/>
            <person name="Nakano N."/>
            <person name="Nakauchi H."/>
            <person name="Ng P."/>
            <person name="Nilsson R."/>
            <person name="Nishiguchi S."/>
            <person name="Nishikawa S."/>
            <person name="Nori F."/>
            <person name="Ohara O."/>
            <person name="Okazaki Y."/>
            <person name="Orlando V."/>
            <person name="Pang K.C."/>
            <person name="Pavan W.J."/>
            <person name="Pavesi G."/>
            <person name="Pesole G."/>
            <person name="Petrovsky N."/>
            <person name="Piazza S."/>
            <person name="Reed J."/>
            <person name="Reid J.F."/>
            <person name="Ring B.Z."/>
            <person name="Ringwald M."/>
            <person name="Rost B."/>
            <person name="Ruan Y."/>
            <person name="Salzberg S.L."/>
            <person name="Sandelin A."/>
            <person name="Schneider C."/>
            <person name="Schoenbach C."/>
            <person name="Sekiguchi K."/>
            <person name="Semple C.A."/>
            <person name="Seno S."/>
            <person name="Sessa L."/>
            <person name="Sheng Y."/>
            <person name="Shibata Y."/>
            <person name="Shimada H."/>
            <person name="Shimada K."/>
            <person name="Silva D."/>
            <person name="Sinclair B."/>
            <person name="Sperling S."/>
            <person name="Stupka E."/>
            <person name="Sugiura K."/>
            <person name="Sultana R."/>
            <person name="Takenaka Y."/>
            <person name="Taki K."/>
            <person name="Tammoja K."/>
            <person name="Tan S.L."/>
            <person name="Tang S."/>
            <person name="Taylor M.S."/>
            <person name="Tegner J."/>
            <person name="Teichmann S.A."/>
            <person name="Ueda H.R."/>
            <person name="van Nimwegen E."/>
            <person name="Verardo R."/>
            <person name="Wei C.L."/>
            <person name="Yagi K."/>
            <person name="Yamanishi H."/>
            <person name="Zabarovsky E."/>
            <person name="Zhu S."/>
            <person name="Zimmer A."/>
            <person name="Hide W."/>
            <person name="Bult C."/>
            <person name="Grimmond S.M."/>
            <person name="Teasdale R.D."/>
            <person name="Liu E.T."/>
            <person name="Brusic V."/>
            <person name="Quackenbush J."/>
            <person name="Wahlestedt C."/>
            <person name="Mattick J.S."/>
            <person name="Hume D.A."/>
            <person name="Kai C."/>
            <person name="Sasaki D."/>
            <person name="Tomaru Y."/>
            <person name="Fukuda S."/>
            <person name="Kanamori-Katayama M."/>
            <person name="Suzuki M."/>
            <person name="Aoki J."/>
            <person name="Arakawa T."/>
            <person name="Iida J."/>
            <person name="Imamura K."/>
            <person name="Itoh M."/>
            <person name="Kato T."/>
            <person name="Kawaji H."/>
            <person name="Kawagashira N."/>
            <person name="Kawashima T."/>
            <person name="Kojima M."/>
            <person name="Kondo S."/>
            <person name="Konno H."/>
            <person name="Nakano K."/>
            <person name="Ninomiya N."/>
            <person name="Nishio T."/>
            <person name="Okada M."/>
            <person name="Plessy C."/>
            <person name="Shibata K."/>
            <person name="Shiraki T."/>
            <person name="Suzuki S."/>
            <person name="Tagami M."/>
            <person name="Waki K."/>
            <person name="Watahiki A."/>
            <person name="Okamura-Oho Y."/>
            <person name="Suzuki H."/>
            <person name="Kawai J."/>
            <person name="Hayashizaki Y."/>
        </authorList>
    </citation>
    <scope>NUCLEOTIDE SEQUENCE [LARGE SCALE MRNA] (ISOFORMS 1 AND 2)</scope>
    <source>
        <strain>C57BL/6J</strain>
        <tissue>Kidney</tissue>
        <tissue>Testis</tissue>
    </source>
</reference>
<reference key="2">
    <citation type="journal article" date="2009" name="PLoS Biol.">
        <title>Lineage-specific biology revealed by a finished genome assembly of the mouse.</title>
        <authorList>
            <person name="Church D.M."/>
            <person name="Goodstadt L."/>
            <person name="Hillier L.W."/>
            <person name="Zody M.C."/>
            <person name="Goldstein S."/>
            <person name="She X."/>
            <person name="Bult C.J."/>
            <person name="Agarwala R."/>
            <person name="Cherry J.L."/>
            <person name="DiCuccio M."/>
            <person name="Hlavina W."/>
            <person name="Kapustin Y."/>
            <person name="Meric P."/>
            <person name="Maglott D."/>
            <person name="Birtle Z."/>
            <person name="Marques A.C."/>
            <person name="Graves T."/>
            <person name="Zhou S."/>
            <person name="Teague B."/>
            <person name="Potamousis K."/>
            <person name="Churas C."/>
            <person name="Place M."/>
            <person name="Herschleb J."/>
            <person name="Runnheim R."/>
            <person name="Forrest D."/>
            <person name="Amos-Landgraf J."/>
            <person name="Schwartz D.C."/>
            <person name="Cheng Z."/>
            <person name="Lindblad-Toh K."/>
            <person name="Eichler E.E."/>
            <person name="Ponting C.P."/>
        </authorList>
    </citation>
    <scope>NUCLEOTIDE SEQUENCE [LARGE SCALE GENOMIC DNA]</scope>
    <source>
        <strain>C57BL/6J</strain>
    </source>
</reference>
<reference key="3">
    <citation type="submission" date="2005-07" db="EMBL/GenBank/DDBJ databases">
        <authorList>
            <person name="Mural R.J."/>
            <person name="Adams M.D."/>
            <person name="Myers E.W."/>
            <person name="Smith H.O."/>
            <person name="Venter J.C."/>
        </authorList>
    </citation>
    <scope>NUCLEOTIDE SEQUENCE [LARGE SCALE GENOMIC DNA]</scope>
</reference>
<feature type="chain" id="PRO_0000073542" description="Calcyphosin-2">
    <location>
        <begin position="1"/>
        <end position="550"/>
    </location>
</feature>
<feature type="domain" description="EF-hand 1" evidence="1">
    <location>
        <begin position="379"/>
        <end position="414"/>
    </location>
</feature>
<feature type="domain" description="EF-hand 2" evidence="4">
    <location>
        <begin position="415"/>
        <end position="452"/>
    </location>
</feature>
<feature type="domain" description="EF-hand 3" evidence="1">
    <location>
        <begin position="453"/>
        <end position="488"/>
    </location>
</feature>
<feature type="region of interest" description="Disordered" evidence="2">
    <location>
        <begin position="1"/>
        <end position="20"/>
    </location>
</feature>
<feature type="region of interest" description="Disordered" evidence="2">
    <location>
        <begin position="175"/>
        <end position="198"/>
    </location>
</feature>
<feature type="compositionally biased region" description="Polar residues" evidence="2">
    <location>
        <begin position="181"/>
        <end position="190"/>
    </location>
</feature>
<feature type="binding site" evidence="1">
    <location>
        <position position="466"/>
    </location>
    <ligand>
        <name>Ca(2+)</name>
        <dbReference type="ChEBI" id="CHEBI:29108"/>
    </ligand>
</feature>
<feature type="binding site" evidence="1">
    <location>
        <position position="468"/>
    </location>
    <ligand>
        <name>Ca(2+)</name>
        <dbReference type="ChEBI" id="CHEBI:29108"/>
    </ligand>
</feature>
<feature type="binding site" evidence="1">
    <location>
        <position position="470"/>
    </location>
    <ligand>
        <name>Ca(2+)</name>
        <dbReference type="ChEBI" id="CHEBI:29108"/>
    </ligand>
</feature>
<feature type="binding site" evidence="1">
    <location>
        <position position="477"/>
    </location>
    <ligand>
        <name>Ca(2+)</name>
        <dbReference type="ChEBI" id="CHEBI:29108"/>
    </ligand>
</feature>
<feature type="splice variant" id="VSP_014411" description="In isoform 2." evidence="3">
    <location>
        <begin position="1"/>
        <end position="84"/>
    </location>
</feature>
<feature type="splice variant" id="VSP_062160" description="In isoform 3.">
    <original>M</original>
    <variation>MDLEVKGVAASRSQTRLFSGRKNSLQQGWTSRSWTNQNSCLPM</variation>
    <location>
        <position position="1"/>
    </location>
</feature>
<feature type="splice variant" id="VSP_014412" description="In isoform 2." evidence="3">
    <location>
        <begin position="173"/>
        <end position="212"/>
    </location>
</feature>
<feature type="sequence conflict" description="In Ref. 1; BAC39412." evidence="4" ref="1">
    <original>K</original>
    <variation>R</variation>
    <location>
        <position position="443"/>
    </location>
</feature>
<feature type="sequence conflict" description="In Ref. 1; BAC39412." evidence="4" ref="1">
    <original>K</original>
    <variation>Q</variation>
    <location>
        <position position="469"/>
    </location>
</feature>
<feature type="sequence conflict" description="In Ref. 1; BAC39412." evidence="4" ref="1">
    <original>Y</original>
    <variation>C</variation>
    <location>
        <position position="482"/>
    </location>
</feature>
<dbReference type="EMBL" id="AK015008">
    <property type="protein sequence ID" value="BAC25455.1"/>
    <property type="molecule type" value="mRNA"/>
</dbReference>
<dbReference type="EMBL" id="AK085286">
    <property type="protein sequence ID" value="BAC39412.1"/>
    <property type="molecule type" value="mRNA"/>
</dbReference>
<dbReference type="EMBL" id="AC166263">
    <property type="status" value="NOT_ANNOTATED_CDS"/>
    <property type="molecule type" value="Genomic_DNA"/>
</dbReference>
<dbReference type="EMBL" id="CH466539">
    <property type="protein sequence ID" value="EDL21750.1"/>
    <property type="molecule type" value="Genomic_DNA"/>
</dbReference>
<dbReference type="CCDS" id="CCDS24172.2">
    <molecule id="Q8BUG5-3"/>
</dbReference>
<dbReference type="CCDS" id="CCDS78896.1">
    <molecule id="Q8BUG5-1"/>
</dbReference>
<dbReference type="RefSeq" id="NP_001297604.1">
    <molecule id="Q8BUG5-1"/>
    <property type="nucleotide sequence ID" value="NM_001310675.1"/>
</dbReference>
<dbReference type="RefSeq" id="NP_840062.2">
    <molecule id="Q8BUG5-3"/>
    <property type="nucleotide sequence ID" value="NM_178278.4"/>
</dbReference>
<dbReference type="RefSeq" id="XP_006513877.1">
    <molecule id="Q8BUG5-3"/>
    <property type="nucleotide sequence ID" value="XM_006513814.4"/>
</dbReference>
<dbReference type="RefSeq" id="XP_006513878.1">
    <molecule id="Q8BUG5-3"/>
    <property type="nucleotide sequence ID" value="XM_006513815.1"/>
</dbReference>
<dbReference type="RefSeq" id="XP_006513879.1">
    <molecule id="Q8BUG5-3"/>
    <property type="nucleotide sequence ID" value="XM_006513816.1"/>
</dbReference>
<dbReference type="SMR" id="Q8BUG5"/>
<dbReference type="FunCoup" id="Q8BUG5">
    <property type="interactions" value="3"/>
</dbReference>
<dbReference type="STRING" id="10090.ENSMUSP00000129887"/>
<dbReference type="iPTMnet" id="Q8BUG5"/>
<dbReference type="PhosphoSitePlus" id="Q8BUG5"/>
<dbReference type="jPOST" id="Q8BUG5"/>
<dbReference type="PaxDb" id="10090-ENSMUSP00000129887"/>
<dbReference type="ProteomicsDB" id="265673">
    <molecule id="Q8BUG5-1"/>
</dbReference>
<dbReference type="ProteomicsDB" id="265674">
    <molecule id="Q8BUG5-2"/>
</dbReference>
<dbReference type="ProteomicsDB" id="367315"/>
<dbReference type="Antibodypedia" id="29581">
    <property type="antibodies" value="107 antibodies from 22 providers"/>
</dbReference>
<dbReference type="Ensembl" id="ENSMUST00000092176.8">
    <molecule id="Q8BUG5-1"/>
    <property type="protein sequence ID" value="ENSMUSP00000089815.2"/>
    <property type="gene ID" value="ENSMUSG00000035694.16"/>
</dbReference>
<dbReference type="Ensembl" id="ENSMUST00000170013.2">
    <molecule id="Q8BUG5-3"/>
    <property type="protein sequence ID" value="ENSMUSP00000129887.2"/>
    <property type="gene ID" value="ENSMUSG00000035694.16"/>
</dbReference>
<dbReference type="GeneID" id="353025"/>
<dbReference type="KEGG" id="mmu:353025"/>
<dbReference type="UCSC" id="uc011xni.1">
    <molecule id="Q8BUG5-2"/>
    <property type="organism name" value="mouse"/>
</dbReference>
<dbReference type="AGR" id="MGI:2441980"/>
<dbReference type="CTD" id="84698"/>
<dbReference type="MGI" id="MGI:2441980">
    <property type="gene designation" value="Caps2"/>
</dbReference>
<dbReference type="VEuPathDB" id="HostDB:ENSMUSG00000035694"/>
<dbReference type="eggNOG" id="KOG0032">
    <property type="taxonomic scope" value="Eukaryota"/>
</dbReference>
<dbReference type="GeneTree" id="ENSGT00940000159670"/>
<dbReference type="HOGENOM" id="CLU_036726_3_0_1"/>
<dbReference type="InParanoid" id="Q8BUG5"/>
<dbReference type="OMA" id="ESAWLIM"/>
<dbReference type="OrthoDB" id="6280085at2759"/>
<dbReference type="TreeFam" id="TF323924"/>
<dbReference type="BioGRID-ORCS" id="353025">
    <property type="hits" value="0 hits in 76 CRISPR screens"/>
</dbReference>
<dbReference type="ChiTaRS" id="Caps2">
    <property type="organism name" value="mouse"/>
</dbReference>
<dbReference type="PRO" id="PR:Q8BUG5"/>
<dbReference type="Proteomes" id="UP000000589">
    <property type="component" value="Chromosome 10"/>
</dbReference>
<dbReference type="RNAct" id="Q8BUG5">
    <property type="molecule type" value="protein"/>
</dbReference>
<dbReference type="Bgee" id="ENSMUSG00000035694">
    <property type="expression patterns" value="Expressed in choroid plexus epithelium and 76 other cell types or tissues"/>
</dbReference>
<dbReference type="ExpressionAtlas" id="Q8BUG5">
    <property type="expression patterns" value="baseline and differential"/>
</dbReference>
<dbReference type="GO" id="GO:0005509">
    <property type="term" value="F:calcium ion binding"/>
    <property type="evidence" value="ECO:0007669"/>
    <property type="project" value="InterPro"/>
</dbReference>
<dbReference type="Gene3D" id="1.10.238.10">
    <property type="entry name" value="EF-hand"/>
    <property type="match status" value="2"/>
</dbReference>
<dbReference type="InterPro" id="IPR051581">
    <property type="entry name" value="Ca-bind_SignalingProt"/>
</dbReference>
<dbReference type="InterPro" id="IPR011992">
    <property type="entry name" value="EF-hand-dom_pair"/>
</dbReference>
<dbReference type="InterPro" id="IPR018247">
    <property type="entry name" value="EF_Hand_1_Ca_BS"/>
</dbReference>
<dbReference type="InterPro" id="IPR002048">
    <property type="entry name" value="EF_hand_dom"/>
</dbReference>
<dbReference type="PANTHER" id="PTHR34524">
    <property type="entry name" value="CALCYPHOSIN"/>
    <property type="match status" value="1"/>
</dbReference>
<dbReference type="PANTHER" id="PTHR34524:SF3">
    <property type="entry name" value="CALCYPHOSIN-2"/>
    <property type="match status" value="1"/>
</dbReference>
<dbReference type="Pfam" id="PF25348">
    <property type="entry name" value="PH_CAYP2"/>
    <property type="match status" value="1"/>
</dbReference>
<dbReference type="SUPFAM" id="SSF47473">
    <property type="entry name" value="EF-hand"/>
    <property type="match status" value="1"/>
</dbReference>
<dbReference type="PROSITE" id="PS00018">
    <property type="entry name" value="EF_HAND_1"/>
    <property type="match status" value="1"/>
</dbReference>
<dbReference type="PROSITE" id="PS50222">
    <property type="entry name" value="EF_HAND_2"/>
    <property type="match status" value="2"/>
</dbReference>
<sequence>MVPPLDLGSLVDSDEEDNFSQTARGTVHVHLNPPRSEPALGWVLPCQRPNSQHRLQEVEQDVIPEDLPAPTGKYRLKYQQYASEMKDGYKQYIQRSTEKPKAASRPEATEKVEGASLDDLMTLDRKALLQQGYADSPYGRQSITRKSDVETVAIEKKKQTVAEQMMMDHLSRAVISDPEQDLNTKNQESSRVPPDSERAPLRVRRRTLHETKIRTNSALTENDLSQKVEFDGRVLSRNGRDACRELIGFFFAHDQSLTVYEYRMFGKNRTSVLPFIKKDIYHHQCGRRKGKQYELGDVYTGATLTFLSCDQPSLPKTIKENALLRLRITNIDQVALNSLKAASAEHGEEEAVSPEAHDQLVLQAIQDKLKEQLHKKGARILTGLGRYFQGLDKEGNGLLEKADFQQALKTFHLEVSEQDFESFWLILQGYGHSKNKVDYGEFKRAIFGEMNEYRKSFVRKAFMQLDFNKTGIVSVIDIRKCYCAKKHPRVISGHSTEEEIKSSFLETLKGTCSKCDEVSYGEFEDYYEGLSIGVAGDEDFVNILRIPWRI</sequence>
<gene>
    <name type="primary">Caps2</name>
</gene>